<name>APT_GEOTN</name>
<feature type="chain" id="PRO_1000000289" description="Adenine phosphoribosyltransferase">
    <location>
        <begin position="1"/>
        <end position="170"/>
    </location>
</feature>
<gene>
    <name evidence="1" type="primary">apt</name>
    <name type="ordered locus">GTNG_2510</name>
</gene>
<keyword id="KW-0963">Cytoplasm</keyword>
<keyword id="KW-0328">Glycosyltransferase</keyword>
<keyword id="KW-0660">Purine salvage</keyword>
<keyword id="KW-0808">Transferase</keyword>
<dbReference type="EC" id="2.4.2.7" evidence="1"/>
<dbReference type="EMBL" id="CP000557">
    <property type="protein sequence ID" value="ABO67855.1"/>
    <property type="molecule type" value="Genomic_DNA"/>
</dbReference>
<dbReference type="RefSeq" id="WP_008881037.1">
    <property type="nucleotide sequence ID" value="NC_009328.1"/>
</dbReference>
<dbReference type="SMR" id="A4IRA1"/>
<dbReference type="GeneID" id="87623342"/>
<dbReference type="KEGG" id="gtn:GTNG_2510"/>
<dbReference type="eggNOG" id="COG0503">
    <property type="taxonomic scope" value="Bacteria"/>
</dbReference>
<dbReference type="HOGENOM" id="CLU_063339_3_0_9"/>
<dbReference type="UniPathway" id="UPA00588">
    <property type="reaction ID" value="UER00646"/>
</dbReference>
<dbReference type="Proteomes" id="UP000001578">
    <property type="component" value="Chromosome"/>
</dbReference>
<dbReference type="GO" id="GO:0005737">
    <property type="term" value="C:cytoplasm"/>
    <property type="evidence" value="ECO:0007669"/>
    <property type="project" value="UniProtKB-SubCell"/>
</dbReference>
<dbReference type="GO" id="GO:0002055">
    <property type="term" value="F:adenine binding"/>
    <property type="evidence" value="ECO:0007669"/>
    <property type="project" value="TreeGrafter"/>
</dbReference>
<dbReference type="GO" id="GO:0003999">
    <property type="term" value="F:adenine phosphoribosyltransferase activity"/>
    <property type="evidence" value="ECO:0007669"/>
    <property type="project" value="UniProtKB-UniRule"/>
</dbReference>
<dbReference type="GO" id="GO:0016208">
    <property type="term" value="F:AMP binding"/>
    <property type="evidence" value="ECO:0007669"/>
    <property type="project" value="TreeGrafter"/>
</dbReference>
<dbReference type="GO" id="GO:0006168">
    <property type="term" value="P:adenine salvage"/>
    <property type="evidence" value="ECO:0007669"/>
    <property type="project" value="InterPro"/>
</dbReference>
<dbReference type="GO" id="GO:0044209">
    <property type="term" value="P:AMP salvage"/>
    <property type="evidence" value="ECO:0007669"/>
    <property type="project" value="UniProtKB-UniRule"/>
</dbReference>
<dbReference type="GO" id="GO:0006166">
    <property type="term" value="P:purine ribonucleoside salvage"/>
    <property type="evidence" value="ECO:0007669"/>
    <property type="project" value="UniProtKB-KW"/>
</dbReference>
<dbReference type="CDD" id="cd06223">
    <property type="entry name" value="PRTases_typeI"/>
    <property type="match status" value="1"/>
</dbReference>
<dbReference type="FunFam" id="3.40.50.2020:FF:000004">
    <property type="entry name" value="Adenine phosphoribosyltransferase"/>
    <property type="match status" value="1"/>
</dbReference>
<dbReference type="Gene3D" id="3.40.50.2020">
    <property type="match status" value="1"/>
</dbReference>
<dbReference type="HAMAP" id="MF_00004">
    <property type="entry name" value="Aden_phosphoribosyltr"/>
    <property type="match status" value="1"/>
</dbReference>
<dbReference type="InterPro" id="IPR005764">
    <property type="entry name" value="Ade_phspho_trans"/>
</dbReference>
<dbReference type="InterPro" id="IPR000836">
    <property type="entry name" value="PRibTrfase_dom"/>
</dbReference>
<dbReference type="InterPro" id="IPR029057">
    <property type="entry name" value="PRTase-like"/>
</dbReference>
<dbReference type="InterPro" id="IPR050054">
    <property type="entry name" value="UPRTase/APRTase"/>
</dbReference>
<dbReference type="NCBIfam" id="TIGR01090">
    <property type="entry name" value="apt"/>
    <property type="match status" value="1"/>
</dbReference>
<dbReference type="NCBIfam" id="NF002633">
    <property type="entry name" value="PRK02304.1-2"/>
    <property type="match status" value="1"/>
</dbReference>
<dbReference type="NCBIfam" id="NF002634">
    <property type="entry name" value="PRK02304.1-3"/>
    <property type="match status" value="1"/>
</dbReference>
<dbReference type="NCBIfam" id="NF002636">
    <property type="entry name" value="PRK02304.1-5"/>
    <property type="match status" value="1"/>
</dbReference>
<dbReference type="PANTHER" id="PTHR32315">
    <property type="entry name" value="ADENINE PHOSPHORIBOSYLTRANSFERASE"/>
    <property type="match status" value="1"/>
</dbReference>
<dbReference type="PANTHER" id="PTHR32315:SF3">
    <property type="entry name" value="ADENINE PHOSPHORIBOSYLTRANSFERASE"/>
    <property type="match status" value="1"/>
</dbReference>
<dbReference type="Pfam" id="PF00156">
    <property type="entry name" value="Pribosyltran"/>
    <property type="match status" value="1"/>
</dbReference>
<dbReference type="SUPFAM" id="SSF53271">
    <property type="entry name" value="PRTase-like"/>
    <property type="match status" value="1"/>
</dbReference>
<sequence>MDLKQYITIVPDFPKPGILFKDITTLMDNGEAYKYATDQIVEYAREKQIDIVVGPEARGFIIGCPVAYALGVGFAPVRKEGKLPREVVRVEYGLEYGTDVLTMHKDAIKPGQRVLITDDLLATGGTMRATIDLVEQLGGVVAGLAFLIELTELGGRKKLEGYDILTLMQF</sequence>
<reference key="1">
    <citation type="journal article" date="2007" name="Proc. Natl. Acad. Sci. U.S.A.">
        <title>Genome and proteome of long-chain alkane degrading Geobacillus thermodenitrificans NG80-2 isolated from a deep-subsurface oil reservoir.</title>
        <authorList>
            <person name="Feng L."/>
            <person name="Wang W."/>
            <person name="Cheng J."/>
            <person name="Ren Y."/>
            <person name="Zhao G."/>
            <person name="Gao C."/>
            <person name="Tang Y."/>
            <person name="Liu X."/>
            <person name="Han W."/>
            <person name="Peng X."/>
            <person name="Liu R."/>
            <person name="Wang L."/>
        </authorList>
    </citation>
    <scope>NUCLEOTIDE SEQUENCE [LARGE SCALE GENOMIC DNA]</scope>
    <source>
        <strain>NG80-2</strain>
    </source>
</reference>
<protein>
    <recommendedName>
        <fullName evidence="1">Adenine phosphoribosyltransferase</fullName>
        <shortName evidence="1">APRT</shortName>
        <ecNumber evidence="1">2.4.2.7</ecNumber>
    </recommendedName>
</protein>
<organism>
    <name type="scientific">Geobacillus thermodenitrificans (strain NG80-2)</name>
    <dbReference type="NCBI Taxonomy" id="420246"/>
    <lineage>
        <taxon>Bacteria</taxon>
        <taxon>Bacillati</taxon>
        <taxon>Bacillota</taxon>
        <taxon>Bacilli</taxon>
        <taxon>Bacillales</taxon>
        <taxon>Anoxybacillaceae</taxon>
        <taxon>Geobacillus</taxon>
    </lineage>
</organism>
<comment type="function">
    <text evidence="1">Catalyzes a salvage reaction resulting in the formation of AMP, that is energically less costly than de novo synthesis.</text>
</comment>
<comment type="catalytic activity">
    <reaction evidence="1">
        <text>AMP + diphosphate = 5-phospho-alpha-D-ribose 1-diphosphate + adenine</text>
        <dbReference type="Rhea" id="RHEA:16609"/>
        <dbReference type="ChEBI" id="CHEBI:16708"/>
        <dbReference type="ChEBI" id="CHEBI:33019"/>
        <dbReference type="ChEBI" id="CHEBI:58017"/>
        <dbReference type="ChEBI" id="CHEBI:456215"/>
        <dbReference type="EC" id="2.4.2.7"/>
    </reaction>
</comment>
<comment type="pathway">
    <text evidence="1">Purine metabolism; AMP biosynthesis via salvage pathway; AMP from adenine: step 1/1.</text>
</comment>
<comment type="subunit">
    <text evidence="1">Homodimer.</text>
</comment>
<comment type="subcellular location">
    <subcellularLocation>
        <location evidence="1">Cytoplasm</location>
    </subcellularLocation>
</comment>
<comment type="similarity">
    <text evidence="1">Belongs to the purine/pyrimidine phosphoribosyltransferase family.</text>
</comment>
<accession>A4IRA1</accession>
<proteinExistence type="inferred from homology"/>
<evidence type="ECO:0000255" key="1">
    <source>
        <dbReference type="HAMAP-Rule" id="MF_00004"/>
    </source>
</evidence>